<dbReference type="EC" id="2.2.1.7" evidence="1"/>
<dbReference type="EMBL" id="CP000542">
    <property type="protein sequence ID" value="ABM59013.1"/>
    <property type="molecule type" value="Genomic_DNA"/>
</dbReference>
<dbReference type="RefSeq" id="WP_011811005.1">
    <property type="nucleotide sequence ID" value="NC_008786.1"/>
</dbReference>
<dbReference type="SMR" id="A1WN06"/>
<dbReference type="STRING" id="391735.Veis_3283"/>
<dbReference type="GeneID" id="76461730"/>
<dbReference type="KEGG" id="vei:Veis_3283"/>
<dbReference type="eggNOG" id="COG1154">
    <property type="taxonomic scope" value="Bacteria"/>
</dbReference>
<dbReference type="HOGENOM" id="CLU_009227_1_4_4"/>
<dbReference type="OrthoDB" id="9803371at2"/>
<dbReference type="UniPathway" id="UPA00064">
    <property type="reaction ID" value="UER00091"/>
</dbReference>
<dbReference type="Proteomes" id="UP000000374">
    <property type="component" value="Chromosome"/>
</dbReference>
<dbReference type="GO" id="GO:0005829">
    <property type="term" value="C:cytosol"/>
    <property type="evidence" value="ECO:0007669"/>
    <property type="project" value="TreeGrafter"/>
</dbReference>
<dbReference type="GO" id="GO:0008661">
    <property type="term" value="F:1-deoxy-D-xylulose-5-phosphate synthase activity"/>
    <property type="evidence" value="ECO:0007669"/>
    <property type="project" value="UniProtKB-UniRule"/>
</dbReference>
<dbReference type="GO" id="GO:0000287">
    <property type="term" value="F:magnesium ion binding"/>
    <property type="evidence" value="ECO:0007669"/>
    <property type="project" value="UniProtKB-UniRule"/>
</dbReference>
<dbReference type="GO" id="GO:0030976">
    <property type="term" value="F:thiamine pyrophosphate binding"/>
    <property type="evidence" value="ECO:0007669"/>
    <property type="project" value="UniProtKB-UniRule"/>
</dbReference>
<dbReference type="GO" id="GO:0052865">
    <property type="term" value="P:1-deoxy-D-xylulose 5-phosphate biosynthetic process"/>
    <property type="evidence" value="ECO:0007669"/>
    <property type="project" value="UniProtKB-UniPathway"/>
</dbReference>
<dbReference type="GO" id="GO:0019288">
    <property type="term" value="P:isopentenyl diphosphate biosynthetic process, methylerythritol 4-phosphate pathway"/>
    <property type="evidence" value="ECO:0007669"/>
    <property type="project" value="TreeGrafter"/>
</dbReference>
<dbReference type="GO" id="GO:0016114">
    <property type="term" value="P:terpenoid biosynthetic process"/>
    <property type="evidence" value="ECO:0007669"/>
    <property type="project" value="UniProtKB-UniRule"/>
</dbReference>
<dbReference type="GO" id="GO:0009228">
    <property type="term" value="P:thiamine biosynthetic process"/>
    <property type="evidence" value="ECO:0007669"/>
    <property type="project" value="UniProtKB-UniRule"/>
</dbReference>
<dbReference type="CDD" id="cd02007">
    <property type="entry name" value="TPP_DXS"/>
    <property type="match status" value="1"/>
</dbReference>
<dbReference type="CDD" id="cd07033">
    <property type="entry name" value="TPP_PYR_DXS_TK_like"/>
    <property type="match status" value="1"/>
</dbReference>
<dbReference type="FunFam" id="3.40.50.920:FF:000002">
    <property type="entry name" value="1-deoxy-D-xylulose-5-phosphate synthase"/>
    <property type="match status" value="1"/>
</dbReference>
<dbReference type="FunFam" id="3.40.50.970:FF:000005">
    <property type="entry name" value="1-deoxy-D-xylulose-5-phosphate synthase"/>
    <property type="match status" value="1"/>
</dbReference>
<dbReference type="Gene3D" id="3.40.50.920">
    <property type="match status" value="1"/>
</dbReference>
<dbReference type="Gene3D" id="3.40.50.970">
    <property type="match status" value="2"/>
</dbReference>
<dbReference type="HAMAP" id="MF_00315">
    <property type="entry name" value="DXP_synth"/>
    <property type="match status" value="1"/>
</dbReference>
<dbReference type="InterPro" id="IPR005477">
    <property type="entry name" value="Dxylulose-5-P_synthase"/>
</dbReference>
<dbReference type="InterPro" id="IPR029061">
    <property type="entry name" value="THDP-binding"/>
</dbReference>
<dbReference type="InterPro" id="IPR009014">
    <property type="entry name" value="Transketo_C/PFOR_II"/>
</dbReference>
<dbReference type="InterPro" id="IPR005475">
    <property type="entry name" value="Transketolase-like_Pyr-bd"/>
</dbReference>
<dbReference type="InterPro" id="IPR020826">
    <property type="entry name" value="Transketolase_BS"/>
</dbReference>
<dbReference type="InterPro" id="IPR033248">
    <property type="entry name" value="Transketolase_C"/>
</dbReference>
<dbReference type="InterPro" id="IPR049557">
    <property type="entry name" value="Transketolase_CS"/>
</dbReference>
<dbReference type="NCBIfam" id="TIGR00204">
    <property type="entry name" value="dxs"/>
    <property type="match status" value="1"/>
</dbReference>
<dbReference type="NCBIfam" id="NF003933">
    <property type="entry name" value="PRK05444.2-2"/>
    <property type="match status" value="1"/>
</dbReference>
<dbReference type="PANTHER" id="PTHR43322">
    <property type="entry name" value="1-D-DEOXYXYLULOSE 5-PHOSPHATE SYNTHASE-RELATED"/>
    <property type="match status" value="1"/>
</dbReference>
<dbReference type="PANTHER" id="PTHR43322:SF5">
    <property type="entry name" value="1-DEOXY-D-XYLULOSE-5-PHOSPHATE SYNTHASE, CHLOROPLASTIC"/>
    <property type="match status" value="1"/>
</dbReference>
<dbReference type="Pfam" id="PF13292">
    <property type="entry name" value="DXP_synthase_N"/>
    <property type="match status" value="1"/>
</dbReference>
<dbReference type="Pfam" id="PF02779">
    <property type="entry name" value="Transket_pyr"/>
    <property type="match status" value="1"/>
</dbReference>
<dbReference type="Pfam" id="PF02780">
    <property type="entry name" value="Transketolase_C"/>
    <property type="match status" value="1"/>
</dbReference>
<dbReference type="SMART" id="SM00861">
    <property type="entry name" value="Transket_pyr"/>
    <property type="match status" value="1"/>
</dbReference>
<dbReference type="SUPFAM" id="SSF52518">
    <property type="entry name" value="Thiamin diphosphate-binding fold (THDP-binding)"/>
    <property type="match status" value="2"/>
</dbReference>
<dbReference type="SUPFAM" id="SSF52922">
    <property type="entry name" value="TK C-terminal domain-like"/>
    <property type="match status" value="1"/>
</dbReference>
<dbReference type="PROSITE" id="PS00801">
    <property type="entry name" value="TRANSKETOLASE_1"/>
    <property type="match status" value="1"/>
</dbReference>
<dbReference type="PROSITE" id="PS00802">
    <property type="entry name" value="TRANSKETOLASE_2"/>
    <property type="match status" value="1"/>
</dbReference>
<comment type="function">
    <text evidence="1">Catalyzes the acyloin condensation reaction between C atoms 2 and 3 of pyruvate and glyceraldehyde 3-phosphate to yield 1-deoxy-D-xylulose-5-phosphate (DXP).</text>
</comment>
<comment type="catalytic activity">
    <reaction evidence="1">
        <text>D-glyceraldehyde 3-phosphate + pyruvate + H(+) = 1-deoxy-D-xylulose 5-phosphate + CO2</text>
        <dbReference type="Rhea" id="RHEA:12605"/>
        <dbReference type="ChEBI" id="CHEBI:15361"/>
        <dbReference type="ChEBI" id="CHEBI:15378"/>
        <dbReference type="ChEBI" id="CHEBI:16526"/>
        <dbReference type="ChEBI" id="CHEBI:57792"/>
        <dbReference type="ChEBI" id="CHEBI:59776"/>
        <dbReference type="EC" id="2.2.1.7"/>
    </reaction>
</comment>
<comment type="cofactor">
    <cofactor evidence="1">
        <name>Mg(2+)</name>
        <dbReference type="ChEBI" id="CHEBI:18420"/>
    </cofactor>
    <text evidence="1">Binds 1 Mg(2+) ion per subunit.</text>
</comment>
<comment type="cofactor">
    <cofactor evidence="1">
        <name>thiamine diphosphate</name>
        <dbReference type="ChEBI" id="CHEBI:58937"/>
    </cofactor>
    <text evidence="1">Binds 1 thiamine pyrophosphate per subunit.</text>
</comment>
<comment type="pathway">
    <text evidence="1">Metabolic intermediate biosynthesis; 1-deoxy-D-xylulose 5-phosphate biosynthesis; 1-deoxy-D-xylulose 5-phosphate from D-glyceraldehyde 3-phosphate and pyruvate: step 1/1.</text>
</comment>
<comment type="subunit">
    <text evidence="1">Homodimer.</text>
</comment>
<comment type="similarity">
    <text evidence="1">Belongs to the transketolase family. DXPS subfamily.</text>
</comment>
<reference key="1">
    <citation type="submission" date="2006-12" db="EMBL/GenBank/DDBJ databases">
        <title>Complete sequence of chromosome 1 of Verminephrobacter eiseniae EF01-2.</title>
        <authorList>
            <person name="Copeland A."/>
            <person name="Lucas S."/>
            <person name="Lapidus A."/>
            <person name="Barry K."/>
            <person name="Detter J.C."/>
            <person name="Glavina del Rio T."/>
            <person name="Dalin E."/>
            <person name="Tice H."/>
            <person name="Pitluck S."/>
            <person name="Chertkov O."/>
            <person name="Brettin T."/>
            <person name="Bruce D."/>
            <person name="Han C."/>
            <person name="Tapia R."/>
            <person name="Gilna P."/>
            <person name="Schmutz J."/>
            <person name="Larimer F."/>
            <person name="Land M."/>
            <person name="Hauser L."/>
            <person name="Kyrpides N."/>
            <person name="Kim E."/>
            <person name="Stahl D."/>
            <person name="Richardson P."/>
        </authorList>
    </citation>
    <scope>NUCLEOTIDE SEQUENCE [LARGE SCALE GENOMIC DNA]</scope>
    <source>
        <strain>EF01-2</strain>
    </source>
</reference>
<name>DXS_VEREI</name>
<organism>
    <name type="scientific">Verminephrobacter eiseniae (strain EF01-2)</name>
    <dbReference type="NCBI Taxonomy" id="391735"/>
    <lineage>
        <taxon>Bacteria</taxon>
        <taxon>Pseudomonadati</taxon>
        <taxon>Pseudomonadota</taxon>
        <taxon>Betaproteobacteria</taxon>
        <taxon>Burkholderiales</taxon>
        <taxon>Comamonadaceae</taxon>
        <taxon>Verminephrobacter</taxon>
    </lineage>
</organism>
<feature type="chain" id="PRO_1000019090" description="1-deoxy-D-xylulose-5-phosphate synthase">
    <location>
        <begin position="1"/>
        <end position="631"/>
    </location>
</feature>
<feature type="binding site" evidence="1">
    <location>
        <position position="78"/>
    </location>
    <ligand>
        <name>thiamine diphosphate</name>
        <dbReference type="ChEBI" id="CHEBI:58937"/>
    </ligand>
</feature>
<feature type="binding site" evidence="1">
    <location>
        <begin position="119"/>
        <end position="121"/>
    </location>
    <ligand>
        <name>thiamine diphosphate</name>
        <dbReference type="ChEBI" id="CHEBI:58937"/>
    </ligand>
</feature>
<feature type="binding site" evidence="1">
    <location>
        <position position="150"/>
    </location>
    <ligand>
        <name>Mg(2+)</name>
        <dbReference type="ChEBI" id="CHEBI:18420"/>
    </ligand>
</feature>
<feature type="binding site" evidence="1">
    <location>
        <begin position="151"/>
        <end position="152"/>
    </location>
    <ligand>
        <name>thiamine diphosphate</name>
        <dbReference type="ChEBI" id="CHEBI:58937"/>
    </ligand>
</feature>
<feature type="binding site" evidence="1">
    <location>
        <position position="179"/>
    </location>
    <ligand>
        <name>Mg(2+)</name>
        <dbReference type="ChEBI" id="CHEBI:18420"/>
    </ligand>
</feature>
<feature type="binding site" evidence="1">
    <location>
        <position position="179"/>
    </location>
    <ligand>
        <name>thiamine diphosphate</name>
        <dbReference type="ChEBI" id="CHEBI:58937"/>
    </ligand>
</feature>
<feature type="binding site" evidence="1">
    <location>
        <position position="286"/>
    </location>
    <ligand>
        <name>thiamine diphosphate</name>
        <dbReference type="ChEBI" id="CHEBI:58937"/>
    </ligand>
</feature>
<feature type="binding site" evidence="1">
    <location>
        <position position="368"/>
    </location>
    <ligand>
        <name>thiamine diphosphate</name>
        <dbReference type="ChEBI" id="CHEBI:58937"/>
    </ligand>
</feature>
<proteinExistence type="inferred from homology"/>
<sequence length="631" mass="67576">MPSTSFPLLETIDDPAQLRQLARAQLKVLAAELRGFVLESVSRTGGHLSSNLGTVELTVALHHVFQTPHDRLVWDVGHQTYAHKILTGRRERMHTLRQQGGISGFPQRGESVYDTFGTAHSSTSISAALGMALAAKRKGESRHTVAIIGDGAMSAGMAFEALNNAGVADCNLLVVLNDNDMSISPPVGALNRYLAQLMSGRFYAAAKNMGKTVLRPMPPLLEFAKRFEQQAKGLVVPATLFEKFGFNYIGPIDGHDLDSLIPTLDNIKGLQGPQFLHVVTKKGQGYKLAEADPVAYHGPARFDPAVGLVKSSTAPRLTFTQVFGQWLCDMAAHDERLVGITPAMREGSGMVEFEQRFPDRYYDVGIAEQHAVTFAAGMACEGAKPVVAIYSTFLQRGYDQLIHDVALQNLPVVFALDRAGLVGADGATHAGAYDIAFLRCIPNMGLACPADERECRQLLSSAYAQNHPVAVRYPRGSGAGVAPLAGLDGLPFGKGEIRRERQRQDSNAPRIAILAFGSLLYPALEAADALDATVVNMRWAKPLDDALLRQVAEGHDALVTLEEGAIMGGAGSAVTETLNAAGILRPVLQLGLADIFIEHGDPAKLLAMQGLNAAGIRAAIAARFPAIDVAR</sequence>
<gene>
    <name evidence="1" type="primary">dxs</name>
    <name type="ordered locus">Veis_3283</name>
</gene>
<keyword id="KW-0414">Isoprene biosynthesis</keyword>
<keyword id="KW-0460">Magnesium</keyword>
<keyword id="KW-0479">Metal-binding</keyword>
<keyword id="KW-1185">Reference proteome</keyword>
<keyword id="KW-0784">Thiamine biosynthesis</keyword>
<keyword id="KW-0786">Thiamine pyrophosphate</keyword>
<keyword id="KW-0808">Transferase</keyword>
<protein>
    <recommendedName>
        <fullName evidence="1">1-deoxy-D-xylulose-5-phosphate synthase</fullName>
        <ecNumber evidence="1">2.2.1.7</ecNumber>
    </recommendedName>
    <alternativeName>
        <fullName evidence="1">1-deoxyxylulose-5-phosphate synthase</fullName>
        <shortName evidence="1">DXP synthase</shortName>
        <shortName evidence="1">DXPS</shortName>
    </alternativeName>
</protein>
<evidence type="ECO:0000255" key="1">
    <source>
        <dbReference type="HAMAP-Rule" id="MF_00315"/>
    </source>
</evidence>
<accession>A1WN06</accession>